<gene>
    <name evidence="1" type="primary">atpB</name>
    <name type="ordered locus">SPT_1449</name>
</gene>
<proteinExistence type="inferred from homology"/>
<keyword id="KW-0066">ATP synthesis</keyword>
<keyword id="KW-1003">Cell membrane</keyword>
<keyword id="KW-0138">CF(0)</keyword>
<keyword id="KW-0375">Hydrogen ion transport</keyword>
<keyword id="KW-0406">Ion transport</keyword>
<keyword id="KW-0472">Membrane</keyword>
<keyword id="KW-0812">Transmembrane</keyword>
<keyword id="KW-1133">Transmembrane helix</keyword>
<keyword id="KW-0813">Transport</keyword>
<organism>
    <name type="scientific">Streptococcus pneumoniae (strain Taiwan19F-14)</name>
    <dbReference type="NCBI Taxonomy" id="487213"/>
    <lineage>
        <taxon>Bacteria</taxon>
        <taxon>Bacillati</taxon>
        <taxon>Bacillota</taxon>
        <taxon>Bacilli</taxon>
        <taxon>Lactobacillales</taxon>
        <taxon>Streptococcaceae</taxon>
        <taxon>Streptococcus</taxon>
    </lineage>
</organism>
<reference key="1">
    <citation type="journal article" date="2010" name="Genome Biol.">
        <title>Structure and dynamics of the pan-genome of Streptococcus pneumoniae and closely related species.</title>
        <authorList>
            <person name="Donati C."/>
            <person name="Hiller N.L."/>
            <person name="Tettelin H."/>
            <person name="Muzzi A."/>
            <person name="Croucher N.J."/>
            <person name="Angiuoli S.V."/>
            <person name="Oggioni M."/>
            <person name="Dunning Hotopp J.C."/>
            <person name="Hu F.Z."/>
            <person name="Riley D.R."/>
            <person name="Covacci A."/>
            <person name="Mitchell T.J."/>
            <person name="Bentley S.D."/>
            <person name="Kilian M."/>
            <person name="Ehrlich G.D."/>
            <person name="Rappuoli R."/>
            <person name="Moxon E.R."/>
            <person name="Masignani V."/>
        </authorList>
    </citation>
    <scope>NUCLEOTIDE SEQUENCE [LARGE SCALE GENOMIC DNA]</scope>
    <source>
        <strain>Taiwan19F-14</strain>
    </source>
</reference>
<name>ATP6_STRZT</name>
<sequence length="238" mass="27208">MEESINPIISIGPVIFNLTMLAMTLLIVGVIFVFIYWASRNMTLKPKGKQNVLEYVYDFVIGFTEPNIGSRYMKDYSLFFLCLFLFMVIANNLGLMTKLQTIDGTNWWSSPTANLQYDLTLSFLVILLTHIESVRRRGFKKSIKSFMSPVFVIPMNILEEFTNFLSLALRIFGNIFAGEVMTSLLLLLSHQAIYWYPVAFGANLAWTAFSVFISCIQAYVFTLLTSVYLGNKINIEEE</sequence>
<evidence type="ECO:0000255" key="1">
    <source>
        <dbReference type="HAMAP-Rule" id="MF_01393"/>
    </source>
</evidence>
<protein>
    <recommendedName>
        <fullName evidence="1">ATP synthase subunit a</fullName>
    </recommendedName>
    <alternativeName>
        <fullName evidence="1">ATP synthase F0 sector subunit a</fullName>
    </alternativeName>
    <alternativeName>
        <fullName evidence="1">F-ATPase subunit 6</fullName>
    </alternativeName>
</protein>
<feature type="chain" id="PRO_1000184296" description="ATP synthase subunit a">
    <location>
        <begin position="1"/>
        <end position="238"/>
    </location>
</feature>
<feature type="transmembrane region" description="Helical" evidence="1">
    <location>
        <begin position="15"/>
        <end position="35"/>
    </location>
</feature>
<feature type="transmembrane region" description="Helical" evidence="1">
    <location>
        <begin position="76"/>
        <end position="96"/>
    </location>
</feature>
<feature type="transmembrane region" description="Helical" evidence="1">
    <location>
        <begin position="111"/>
        <end position="131"/>
    </location>
</feature>
<feature type="transmembrane region" description="Helical" evidence="1">
    <location>
        <begin position="167"/>
        <end position="187"/>
    </location>
</feature>
<feature type="transmembrane region" description="Helical" evidence="1">
    <location>
        <begin position="208"/>
        <end position="230"/>
    </location>
</feature>
<dbReference type="EMBL" id="CP000921">
    <property type="protein sequence ID" value="ACO24221.1"/>
    <property type="molecule type" value="Genomic_DNA"/>
</dbReference>
<dbReference type="RefSeq" id="WP_000392851.1">
    <property type="nucleotide sequence ID" value="NC_012469.1"/>
</dbReference>
<dbReference type="SMR" id="C1CSD3"/>
<dbReference type="GeneID" id="45653248"/>
<dbReference type="KEGG" id="snt:SPT_1449"/>
<dbReference type="HOGENOM" id="CLU_041018_2_3_9"/>
<dbReference type="GO" id="GO:0005886">
    <property type="term" value="C:plasma membrane"/>
    <property type="evidence" value="ECO:0007669"/>
    <property type="project" value="UniProtKB-SubCell"/>
</dbReference>
<dbReference type="GO" id="GO:0045259">
    <property type="term" value="C:proton-transporting ATP synthase complex"/>
    <property type="evidence" value="ECO:0007669"/>
    <property type="project" value="UniProtKB-KW"/>
</dbReference>
<dbReference type="GO" id="GO:0046933">
    <property type="term" value="F:proton-transporting ATP synthase activity, rotational mechanism"/>
    <property type="evidence" value="ECO:0007669"/>
    <property type="project" value="UniProtKB-UniRule"/>
</dbReference>
<dbReference type="GO" id="GO:0042777">
    <property type="term" value="P:proton motive force-driven plasma membrane ATP synthesis"/>
    <property type="evidence" value="ECO:0007669"/>
    <property type="project" value="TreeGrafter"/>
</dbReference>
<dbReference type="CDD" id="cd00310">
    <property type="entry name" value="ATP-synt_Fo_a_6"/>
    <property type="match status" value="1"/>
</dbReference>
<dbReference type="Gene3D" id="1.20.120.220">
    <property type="entry name" value="ATP synthase, F0 complex, subunit A"/>
    <property type="match status" value="1"/>
</dbReference>
<dbReference type="HAMAP" id="MF_01393">
    <property type="entry name" value="ATP_synth_a_bact"/>
    <property type="match status" value="1"/>
</dbReference>
<dbReference type="InterPro" id="IPR045082">
    <property type="entry name" value="ATP_syn_F0_a_bact/chloroplast"/>
</dbReference>
<dbReference type="InterPro" id="IPR000568">
    <property type="entry name" value="ATP_synth_F0_asu"/>
</dbReference>
<dbReference type="InterPro" id="IPR035908">
    <property type="entry name" value="F0_ATP_A_sf"/>
</dbReference>
<dbReference type="NCBIfam" id="TIGR01131">
    <property type="entry name" value="ATP_synt_6_or_A"/>
    <property type="match status" value="1"/>
</dbReference>
<dbReference type="NCBIfam" id="NF004479">
    <property type="entry name" value="PRK05815.1-4"/>
    <property type="match status" value="1"/>
</dbReference>
<dbReference type="PANTHER" id="PTHR42823">
    <property type="entry name" value="ATP SYNTHASE SUBUNIT A, CHLOROPLASTIC"/>
    <property type="match status" value="1"/>
</dbReference>
<dbReference type="PANTHER" id="PTHR42823:SF3">
    <property type="entry name" value="ATP SYNTHASE SUBUNIT A, CHLOROPLASTIC"/>
    <property type="match status" value="1"/>
</dbReference>
<dbReference type="Pfam" id="PF00119">
    <property type="entry name" value="ATP-synt_A"/>
    <property type="match status" value="1"/>
</dbReference>
<dbReference type="PRINTS" id="PR00123">
    <property type="entry name" value="ATPASEA"/>
</dbReference>
<dbReference type="SUPFAM" id="SSF81336">
    <property type="entry name" value="F1F0 ATP synthase subunit A"/>
    <property type="match status" value="1"/>
</dbReference>
<comment type="function">
    <text evidence="1">Key component of the proton channel; it plays a direct role in the translocation of protons across the membrane.</text>
</comment>
<comment type="subunit">
    <text evidence="1">F-type ATPases have 2 components, CF(1) - the catalytic core - and CF(0) - the membrane proton channel. CF(1) has five subunits: alpha(3), beta(3), gamma(1), delta(1), epsilon(1). CF(0) has three main subunits: a(1), b(2) and c(9-12). The alpha and beta chains form an alternating ring which encloses part of the gamma chain. CF(1) is attached to CF(0) by a central stalk formed by the gamma and epsilon chains, while a peripheral stalk is formed by the delta and b chains.</text>
</comment>
<comment type="subcellular location">
    <subcellularLocation>
        <location evidence="1">Cell membrane</location>
        <topology evidence="1">Multi-pass membrane protein</topology>
    </subcellularLocation>
</comment>
<comment type="similarity">
    <text evidence="1">Belongs to the ATPase A chain family.</text>
</comment>
<accession>C1CSD3</accession>